<feature type="peptide" id="PRO_0000394440" description="Rothein 3.4" evidence="1">
    <location>
        <begin position="1"/>
        <end position="30"/>
    </location>
</feature>
<feature type="modified residue" description="Leucine amide" evidence="1">
    <location>
        <position position="30"/>
    </location>
</feature>
<accession>P86514</accession>
<protein>
    <recommendedName>
        <fullName evidence="3">Rothein 3.4</fullName>
    </recommendedName>
</protein>
<evidence type="ECO:0000269" key="1">
    <source>
    </source>
</evidence>
<evidence type="ECO:0000269" key="2">
    <source>
    </source>
</evidence>
<evidence type="ECO:0000303" key="3">
    <source>
    </source>
</evidence>
<evidence type="ECO:0000305" key="4"/>
<dbReference type="GO" id="GO:0005576">
    <property type="term" value="C:extracellular region"/>
    <property type="evidence" value="ECO:0000314"/>
    <property type="project" value="UniProtKB"/>
</dbReference>
<dbReference type="GO" id="GO:0006952">
    <property type="term" value="P:defense response"/>
    <property type="evidence" value="ECO:0007669"/>
    <property type="project" value="UniProtKB-KW"/>
</dbReference>
<sequence>ASAAGAVREDDDETLLNPVLNSLDNLVSGL</sequence>
<organism>
    <name type="scientific">Litoria rothii</name>
    <name type="common">Roth's tree frog</name>
    <name type="synonym">Hyla rothii</name>
    <dbReference type="NCBI Taxonomy" id="336074"/>
    <lineage>
        <taxon>Eukaryota</taxon>
        <taxon>Metazoa</taxon>
        <taxon>Chordata</taxon>
        <taxon>Craniata</taxon>
        <taxon>Vertebrata</taxon>
        <taxon>Euteleostomi</taxon>
        <taxon>Amphibia</taxon>
        <taxon>Batrachia</taxon>
        <taxon>Anura</taxon>
        <taxon>Neobatrachia</taxon>
        <taxon>Hyloidea</taxon>
        <taxon>Hylidae</taxon>
        <taxon>Pelodryadinae</taxon>
        <taxon>Litoria</taxon>
    </lineage>
</organism>
<reference evidence="4" key="1">
    <citation type="journal article" date="2005" name="Rapid Commun. Mass Spectrom.">
        <title>The rothein peptides from the skin secretion of Roth's tree frog Litoria rothii. Sequence determination using positive and negative ion electrospray mass spectrometry.</title>
        <authorList>
            <person name="Brinkworth C.S."/>
            <person name="Bowie J.H."/>
            <person name="Bilusich D."/>
            <person name="Tyler M.J."/>
        </authorList>
    </citation>
    <scope>PROTEIN SEQUENCE</scope>
    <scope>SUBCELLULAR LOCATION</scope>
    <scope>TISSUE SPECIFICITY</scope>
    <scope>AMIDATION AT LEU-30</scope>
    <source>
        <tissue evidence="1">Skin secretion</tissue>
    </source>
</reference>
<reference evidence="4" key="2">
    <citation type="journal article" date="2009" name="Toxicon">
        <title>Activities of seasonably variable caerulein and rothein skin peptides from the tree frogs Litoria splendida and Litoria rothii.</title>
        <authorList>
            <person name="Sherman P.J."/>
            <person name="Jackway R.J."/>
            <person name="Nicholson E."/>
            <person name="Musgrave I.F."/>
            <person name="Boontheung P."/>
            <person name="Bowie J.H."/>
        </authorList>
    </citation>
    <scope>FUNCTION</scope>
</reference>
<comment type="function">
    <text evidence="2">Lacks antimicrobial activity. Does not inhibit the formation of NO by neuronal nitric oxide.</text>
</comment>
<comment type="subcellular location">
    <subcellularLocation>
        <location evidence="1">Secreted</location>
    </subcellularLocation>
</comment>
<comment type="tissue specificity">
    <text evidence="1">Expressed by the skin dorsal glands.</text>
</comment>
<comment type="similarity">
    <text evidence="4">Belongs to the frog skin active peptide (FSAP) family. Rothein subfamily.</text>
</comment>
<proteinExistence type="evidence at protein level"/>
<keyword id="KW-0027">Amidation</keyword>
<keyword id="KW-0878">Amphibian defense peptide</keyword>
<keyword id="KW-0903">Direct protein sequencing</keyword>
<keyword id="KW-0964">Secreted</keyword>
<name>ROT34_LITRO</name>